<name>ARGB_LISMC</name>
<organism>
    <name type="scientific">Listeria monocytogenes serotype 4b (strain CLIP80459)</name>
    <dbReference type="NCBI Taxonomy" id="568819"/>
    <lineage>
        <taxon>Bacteria</taxon>
        <taxon>Bacillati</taxon>
        <taxon>Bacillota</taxon>
        <taxon>Bacilli</taxon>
        <taxon>Bacillales</taxon>
        <taxon>Listeriaceae</taxon>
        <taxon>Listeria</taxon>
    </lineage>
</organism>
<evidence type="ECO:0000255" key="1">
    <source>
        <dbReference type="HAMAP-Rule" id="MF_00082"/>
    </source>
</evidence>
<comment type="function">
    <text evidence="1">Catalyzes the ATP-dependent phosphorylation of N-acetyl-L-glutamate.</text>
</comment>
<comment type="catalytic activity">
    <reaction evidence="1">
        <text>N-acetyl-L-glutamate + ATP = N-acetyl-L-glutamyl 5-phosphate + ADP</text>
        <dbReference type="Rhea" id="RHEA:14629"/>
        <dbReference type="ChEBI" id="CHEBI:30616"/>
        <dbReference type="ChEBI" id="CHEBI:44337"/>
        <dbReference type="ChEBI" id="CHEBI:57936"/>
        <dbReference type="ChEBI" id="CHEBI:456216"/>
        <dbReference type="EC" id="2.7.2.8"/>
    </reaction>
</comment>
<comment type="pathway">
    <text evidence="1">Amino-acid biosynthesis; L-arginine biosynthesis; N(2)-acetyl-L-ornithine from L-glutamate: step 2/4.</text>
</comment>
<comment type="subcellular location">
    <subcellularLocation>
        <location evidence="1">Cytoplasm</location>
    </subcellularLocation>
</comment>
<comment type="similarity">
    <text evidence="1">Belongs to the acetylglutamate kinase family. ArgB subfamily.</text>
</comment>
<protein>
    <recommendedName>
        <fullName evidence="1">Acetylglutamate kinase</fullName>
        <ecNumber evidence="1">2.7.2.8</ecNumber>
    </recommendedName>
    <alternativeName>
        <fullName evidence="1">N-acetyl-L-glutamate 5-phosphotransferase</fullName>
    </alternativeName>
    <alternativeName>
        <fullName evidence="1">NAG kinase</fullName>
        <shortName evidence="1">NAGK</shortName>
    </alternativeName>
</protein>
<feature type="chain" id="PRO_1000202565" description="Acetylglutamate kinase">
    <location>
        <begin position="1"/>
        <end position="250"/>
    </location>
</feature>
<feature type="binding site" evidence="1">
    <location>
        <begin position="41"/>
        <end position="42"/>
    </location>
    <ligand>
        <name>substrate</name>
    </ligand>
</feature>
<feature type="binding site" evidence="1">
    <location>
        <position position="63"/>
    </location>
    <ligand>
        <name>substrate</name>
    </ligand>
</feature>
<feature type="binding site" evidence="1">
    <location>
        <position position="156"/>
    </location>
    <ligand>
        <name>substrate</name>
    </ligand>
</feature>
<feature type="site" description="Transition state stabilizer" evidence="1">
    <location>
        <position position="8"/>
    </location>
</feature>
<feature type="site" description="Transition state stabilizer" evidence="1">
    <location>
        <position position="215"/>
    </location>
</feature>
<proteinExistence type="inferred from homology"/>
<accession>C1KVN6</accession>
<keyword id="KW-0028">Amino-acid biosynthesis</keyword>
<keyword id="KW-0055">Arginine biosynthesis</keyword>
<keyword id="KW-0067">ATP-binding</keyword>
<keyword id="KW-0963">Cytoplasm</keyword>
<keyword id="KW-0418">Kinase</keyword>
<keyword id="KW-0547">Nucleotide-binding</keyword>
<keyword id="KW-0808">Transferase</keyword>
<gene>
    <name evidence="1" type="primary">argB</name>
    <name type="ordered locus">Lm4b_01600</name>
</gene>
<reference key="1">
    <citation type="journal article" date="2012" name="BMC Genomics">
        <title>Comparative genomics and transcriptomics of lineages I, II, and III strains of Listeria monocytogenes.</title>
        <authorList>
            <person name="Hain T."/>
            <person name="Ghai R."/>
            <person name="Billion A."/>
            <person name="Kuenne C.T."/>
            <person name="Steinweg C."/>
            <person name="Izar B."/>
            <person name="Mohamed W."/>
            <person name="Mraheil M."/>
            <person name="Domann E."/>
            <person name="Schaffrath S."/>
            <person name="Karst U."/>
            <person name="Goesmann A."/>
            <person name="Oehm S."/>
            <person name="Puhler A."/>
            <person name="Merkl R."/>
            <person name="Vorwerk S."/>
            <person name="Glaser P."/>
            <person name="Garrido P."/>
            <person name="Rusniok C."/>
            <person name="Buchrieser C."/>
            <person name="Goebel W."/>
            <person name="Chakraborty T."/>
        </authorList>
    </citation>
    <scope>NUCLEOTIDE SEQUENCE [LARGE SCALE GENOMIC DNA]</scope>
    <source>
        <strain>CLIP80459</strain>
    </source>
</reference>
<sequence length="250" mass="26550">MENTIVVKLGGVASDNLTEDFFQQIIQWQAANKKIVLVHGGGHYITKMMKSLAIPVETKNGLRVTNKATLEVTKMVLIGQVQPAITTAFQKRNISVIGLNAGDTGLLEADFLNDANLGFVGKITKVKTDLIEQLLSENIITVIAPLGINSEYDWLNVNADTAACEVASALQAEALYLLTDVPGVKKGSEIIGEIATDEIEKLQYAGVIKGGMIPKLASAAFAAENGVGKVIITDSLNTSGTKIKNKVAIG</sequence>
<dbReference type="EC" id="2.7.2.8" evidence="1"/>
<dbReference type="EMBL" id="FM242711">
    <property type="protein sequence ID" value="CAS05361.1"/>
    <property type="molecule type" value="Genomic_DNA"/>
</dbReference>
<dbReference type="RefSeq" id="WP_012681312.1">
    <property type="nucleotide sequence ID" value="NC_012488.1"/>
</dbReference>
<dbReference type="SMR" id="C1KVN6"/>
<dbReference type="KEGG" id="lmc:Lm4b_01600"/>
<dbReference type="HOGENOM" id="CLU_053680_1_0_9"/>
<dbReference type="UniPathway" id="UPA00068">
    <property type="reaction ID" value="UER00107"/>
</dbReference>
<dbReference type="GO" id="GO:0005737">
    <property type="term" value="C:cytoplasm"/>
    <property type="evidence" value="ECO:0007669"/>
    <property type="project" value="UniProtKB-SubCell"/>
</dbReference>
<dbReference type="GO" id="GO:0003991">
    <property type="term" value="F:acetylglutamate kinase activity"/>
    <property type="evidence" value="ECO:0007669"/>
    <property type="project" value="UniProtKB-UniRule"/>
</dbReference>
<dbReference type="GO" id="GO:0005524">
    <property type="term" value="F:ATP binding"/>
    <property type="evidence" value="ECO:0007669"/>
    <property type="project" value="UniProtKB-UniRule"/>
</dbReference>
<dbReference type="GO" id="GO:0042450">
    <property type="term" value="P:arginine biosynthetic process via ornithine"/>
    <property type="evidence" value="ECO:0007669"/>
    <property type="project" value="UniProtKB-UniRule"/>
</dbReference>
<dbReference type="GO" id="GO:0006526">
    <property type="term" value="P:L-arginine biosynthetic process"/>
    <property type="evidence" value="ECO:0007669"/>
    <property type="project" value="UniProtKB-UniPathway"/>
</dbReference>
<dbReference type="CDD" id="cd04238">
    <property type="entry name" value="AAK_NAGK-like"/>
    <property type="match status" value="1"/>
</dbReference>
<dbReference type="FunFam" id="3.40.1160.10:FF:000047">
    <property type="entry name" value="Acetylglutamate kinase"/>
    <property type="match status" value="1"/>
</dbReference>
<dbReference type="Gene3D" id="3.40.1160.10">
    <property type="entry name" value="Acetylglutamate kinase-like"/>
    <property type="match status" value="1"/>
</dbReference>
<dbReference type="HAMAP" id="MF_00082">
    <property type="entry name" value="ArgB"/>
    <property type="match status" value="1"/>
</dbReference>
<dbReference type="InterPro" id="IPR036393">
    <property type="entry name" value="AceGlu_kinase-like_sf"/>
</dbReference>
<dbReference type="InterPro" id="IPR004662">
    <property type="entry name" value="AcgluKinase_fam"/>
</dbReference>
<dbReference type="InterPro" id="IPR037528">
    <property type="entry name" value="ArgB"/>
</dbReference>
<dbReference type="InterPro" id="IPR001048">
    <property type="entry name" value="Asp/Glu/Uridylate_kinase"/>
</dbReference>
<dbReference type="NCBIfam" id="TIGR00761">
    <property type="entry name" value="argB"/>
    <property type="match status" value="1"/>
</dbReference>
<dbReference type="PANTHER" id="PTHR23342">
    <property type="entry name" value="N-ACETYLGLUTAMATE SYNTHASE"/>
    <property type="match status" value="1"/>
</dbReference>
<dbReference type="PANTHER" id="PTHR23342:SF0">
    <property type="entry name" value="N-ACETYLGLUTAMATE SYNTHASE, MITOCHONDRIAL"/>
    <property type="match status" value="1"/>
</dbReference>
<dbReference type="Pfam" id="PF00696">
    <property type="entry name" value="AA_kinase"/>
    <property type="match status" value="1"/>
</dbReference>
<dbReference type="PIRSF" id="PIRSF000728">
    <property type="entry name" value="NAGK"/>
    <property type="match status" value="1"/>
</dbReference>
<dbReference type="SUPFAM" id="SSF53633">
    <property type="entry name" value="Carbamate kinase-like"/>
    <property type="match status" value="1"/>
</dbReference>